<reference key="1">
    <citation type="journal article" date="2002" name="Nat. Genet.">
        <title>Genome sequence of the endocellular obligate symbiont of tsetse flies, Wigglesworthia glossinidia.</title>
        <authorList>
            <person name="Akman L."/>
            <person name="Yamashita A."/>
            <person name="Watanabe H."/>
            <person name="Oshima K."/>
            <person name="Shiba T."/>
            <person name="Hattori M."/>
            <person name="Aksoy S."/>
        </authorList>
    </citation>
    <scope>NUCLEOTIDE SEQUENCE [LARGE SCALE GENOMIC DNA]</scope>
</reference>
<proteinExistence type="inferred from homology"/>
<sequence>MARITVQDAVEKIGNRFDLVLVASQRAREMQIFGKSPMVDKENDKYTVIALREIEQGLIEKQ</sequence>
<name>RPOZ_WIGBR</name>
<comment type="function">
    <text evidence="1">Promotes RNA polymerase assembly. Latches the N- and C-terminal regions of the beta' subunit thereby facilitating its interaction with the beta and alpha subunits.</text>
</comment>
<comment type="catalytic activity">
    <reaction evidence="1">
        <text>RNA(n) + a ribonucleoside 5'-triphosphate = RNA(n+1) + diphosphate</text>
        <dbReference type="Rhea" id="RHEA:21248"/>
        <dbReference type="Rhea" id="RHEA-COMP:14527"/>
        <dbReference type="Rhea" id="RHEA-COMP:17342"/>
        <dbReference type="ChEBI" id="CHEBI:33019"/>
        <dbReference type="ChEBI" id="CHEBI:61557"/>
        <dbReference type="ChEBI" id="CHEBI:140395"/>
        <dbReference type="EC" id="2.7.7.6"/>
    </reaction>
</comment>
<comment type="subunit">
    <text evidence="1">The RNAP catalytic core consists of 2 alpha, 1 beta, 1 beta' and 1 omega subunit. When a sigma factor is associated with the core the holoenzyme is formed, which can initiate transcription.</text>
</comment>
<comment type="similarity">
    <text evidence="1">Belongs to the RNA polymerase subunit omega family.</text>
</comment>
<organism>
    <name type="scientific">Wigglesworthia glossinidia brevipalpis</name>
    <dbReference type="NCBI Taxonomy" id="36870"/>
    <lineage>
        <taxon>Bacteria</taxon>
        <taxon>Pseudomonadati</taxon>
        <taxon>Pseudomonadota</taxon>
        <taxon>Gammaproteobacteria</taxon>
        <taxon>Enterobacterales</taxon>
        <taxon>Erwiniaceae</taxon>
        <taxon>Wigglesworthia</taxon>
    </lineage>
</organism>
<accession>Q8D2E9</accession>
<feature type="chain" id="PRO_0000129013" description="DNA-directed RNA polymerase subunit omega">
    <location>
        <begin position="1"/>
        <end position="62"/>
    </location>
</feature>
<dbReference type="EC" id="2.7.7.6" evidence="1"/>
<dbReference type="EMBL" id="BA000021">
    <property type="protein sequence ID" value="BAC24551.1"/>
    <property type="molecule type" value="Genomic_DNA"/>
</dbReference>
<dbReference type="SMR" id="Q8D2E9"/>
<dbReference type="STRING" id="36870.gene:10368906"/>
<dbReference type="KEGG" id="wbr:rpoZ"/>
<dbReference type="eggNOG" id="COG1758">
    <property type="taxonomic scope" value="Bacteria"/>
</dbReference>
<dbReference type="HOGENOM" id="CLU_125406_5_2_6"/>
<dbReference type="OrthoDB" id="9796300at2"/>
<dbReference type="Proteomes" id="UP000000562">
    <property type="component" value="Chromosome"/>
</dbReference>
<dbReference type="GO" id="GO:0000428">
    <property type="term" value="C:DNA-directed RNA polymerase complex"/>
    <property type="evidence" value="ECO:0007669"/>
    <property type="project" value="UniProtKB-KW"/>
</dbReference>
<dbReference type="GO" id="GO:0003677">
    <property type="term" value="F:DNA binding"/>
    <property type="evidence" value="ECO:0007669"/>
    <property type="project" value="UniProtKB-UniRule"/>
</dbReference>
<dbReference type="GO" id="GO:0003899">
    <property type="term" value="F:DNA-directed RNA polymerase activity"/>
    <property type="evidence" value="ECO:0007669"/>
    <property type="project" value="UniProtKB-UniRule"/>
</dbReference>
<dbReference type="GO" id="GO:0006351">
    <property type="term" value="P:DNA-templated transcription"/>
    <property type="evidence" value="ECO:0007669"/>
    <property type="project" value="UniProtKB-UniRule"/>
</dbReference>
<dbReference type="Gene3D" id="3.90.940.10">
    <property type="match status" value="1"/>
</dbReference>
<dbReference type="HAMAP" id="MF_00366">
    <property type="entry name" value="RNApol_bact_RpoZ"/>
    <property type="match status" value="1"/>
</dbReference>
<dbReference type="InterPro" id="IPR003716">
    <property type="entry name" value="DNA-dir_RNA_pol_omega"/>
</dbReference>
<dbReference type="InterPro" id="IPR006110">
    <property type="entry name" value="Pol_omega/Rpo6/RPB6"/>
</dbReference>
<dbReference type="InterPro" id="IPR036161">
    <property type="entry name" value="RPB6/omega-like_sf"/>
</dbReference>
<dbReference type="NCBIfam" id="TIGR00690">
    <property type="entry name" value="rpoZ"/>
    <property type="match status" value="1"/>
</dbReference>
<dbReference type="PANTHER" id="PTHR34476">
    <property type="entry name" value="DNA-DIRECTED RNA POLYMERASE SUBUNIT OMEGA"/>
    <property type="match status" value="1"/>
</dbReference>
<dbReference type="PANTHER" id="PTHR34476:SF1">
    <property type="entry name" value="DNA-DIRECTED RNA POLYMERASE SUBUNIT OMEGA"/>
    <property type="match status" value="1"/>
</dbReference>
<dbReference type="Pfam" id="PF01192">
    <property type="entry name" value="RNA_pol_Rpb6"/>
    <property type="match status" value="1"/>
</dbReference>
<dbReference type="SMART" id="SM01409">
    <property type="entry name" value="RNA_pol_Rpb6"/>
    <property type="match status" value="1"/>
</dbReference>
<dbReference type="SUPFAM" id="SSF63562">
    <property type="entry name" value="RPB6/omega subunit-like"/>
    <property type="match status" value="1"/>
</dbReference>
<gene>
    <name evidence="1" type="primary">rpoZ</name>
    <name type="ordered locus">WIGBR4050</name>
</gene>
<evidence type="ECO:0000255" key="1">
    <source>
        <dbReference type="HAMAP-Rule" id="MF_00366"/>
    </source>
</evidence>
<protein>
    <recommendedName>
        <fullName evidence="1">DNA-directed RNA polymerase subunit omega</fullName>
        <shortName evidence="1">RNAP omega subunit</shortName>
        <ecNumber evidence="1">2.7.7.6</ecNumber>
    </recommendedName>
    <alternativeName>
        <fullName evidence="1">RNA polymerase omega subunit</fullName>
    </alternativeName>
    <alternativeName>
        <fullName evidence="1">Transcriptase subunit omega</fullName>
    </alternativeName>
</protein>
<keyword id="KW-0240">DNA-directed RNA polymerase</keyword>
<keyword id="KW-0548">Nucleotidyltransferase</keyword>
<keyword id="KW-1185">Reference proteome</keyword>
<keyword id="KW-0804">Transcription</keyword>
<keyword id="KW-0808">Transferase</keyword>